<name>THIE_METMA</name>
<organism>
    <name type="scientific">Methanosarcina mazei (strain ATCC BAA-159 / DSM 3647 / Goe1 / Go1 / JCM 11833 / OCM 88)</name>
    <name type="common">Methanosarcina frisia</name>
    <dbReference type="NCBI Taxonomy" id="192952"/>
    <lineage>
        <taxon>Archaea</taxon>
        <taxon>Methanobacteriati</taxon>
        <taxon>Methanobacteriota</taxon>
        <taxon>Stenosarchaea group</taxon>
        <taxon>Methanomicrobia</taxon>
        <taxon>Methanosarcinales</taxon>
        <taxon>Methanosarcinaceae</taxon>
        <taxon>Methanosarcina</taxon>
    </lineage>
</organism>
<dbReference type="EC" id="2.5.1.3" evidence="1"/>
<dbReference type="EMBL" id="AE008384">
    <property type="protein sequence ID" value="AAM32931.1"/>
    <property type="molecule type" value="Genomic_DNA"/>
</dbReference>
<dbReference type="SMR" id="Q8PS49"/>
<dbReference type="KEGG" id="mma:MM_3235"/>
<dbReference type="PATRIC" id="fig|192952.21.peg.3760"/>
<dbReference type="eggNOG" id="arCOG01089">
    <property type="taxonomic scope" value="Archaea"/>
</dbReference>
<dbReference type="HOGENOM" id="CLU_018272_3_4_2"/>
<dbReference type="UniPathway" id="UPA00060">
    <property type="reaction ID" value="UER00141"/>
</dbReference>
<dbReference type="Proteomes" id="UP000000595">
    <property type="component" value="Chromosome"/>
</dbReference>
<dbReference type="GO" id="GO:0005737">
    <property type="term" value="C:cytoplasm"/>
    <property type="evidence" value="ECO:0007669"/>
    <property type="project" value="TreeGrafter"/>
</dbReference>
<dbReference type="GO" id="GO:0000287">
    <property type="term" value="F:magnesium ion binding"/>
    <property type="evidence" value="ECO:0007669"/>
    <property type="project" value="UniProtKB-UniRule"/>
</dbReference>
<dbReference type="GO" id="GO:0004789">
    <property type="term" value="F:thiamine-phosphate diphosphorylase activity"/>
    <property type="evidence" value="ECO:0007669"/>
    <property type="project" value="UniProtKB-UniRule"/>
</dbReference>
<dbReference type="GO" id="GO:0009228">
    <property type="term" value="P:thiamine biosynthetic process"/>
    <property type="evidence" value="ECO:0007669"/>
    <property type="project" value="UniProtKB-KW"/>
</dbReference>
<dbReference type="GO" id="GO:0009229">
    <property type="term" value="P:thiamine diphosphate biosynthetic process"/>
    <property type="evidence" value="ECO:0007669"/>
    <property type="project" value="UniProtKB-UniRule"/>
</dbReference>
<dbReference type="CDD" id="cd00564">
    <property type="entry name" value="TMP_TenI"/>
    <property type="match status" value="1"/>
</dbReference>
<dbReference type="FunFam" id="3.20.20.70:FF:000096">
    <property type="entry name" value="Thiamine-phosphate synthase"/>
    <property type="match status" value="1"/>
</dbReference>
<dbReference type="Gene3D" id="3.20.20.70">
    <property type="entry name" value="Aldolase class I"/>
    <property type="match status" value="1"/>
</dbReference>
<dbReference type="HAMAP" id="MF_00097">
    <property type="entry name" value="TMP_synthase"/>
    <property type="match status" value="1"/>
</dbReference>
<dbReference type="InterPro" id="IPR013785">
    <property type="entry name" value="Aldolase_TIM"/>
</dbReference>
<dbReference type="InterPro" id="IPR036206">
    <property type="entry name" value="ThiamineP_synth_sf"/>
</dbReference>
<dbReference type="InterPro" id="IPR022998">
    <property type="entry name" value="ThiamineP_synth_TenI"/>
</dbReference>
<dbReference type="InterPro" id="IPR034291">
    <property type="entry name" value="TMP_synthase"/>
</dbReference>
<dbReference type="NCBIfam" id="TIGR00693">
    <property type="entry name" value="thiE"/>
    <property type="match status" value="1"/>
</dbReference>
<dbReference type="PANTHER" id="PTHR20857:SF23">
    <property type="entry name" value="THIAMINE BIOSYNTHETIC BIFUNCTIONAL ENZYME"/>
    <property type="match status" value="1"/>
</dbReference>
<dbReference type="PANTHER" id="PTHR20857">
    <property type="entry name" value="THIAMINE-PHOSPHATE PYROPHOSPHORYLASE"/>
    <property type="match status" value="1"/>
</dbReference>
<dbReference type="Pfam" id="PF02581">
    <property type="entry name" value="TMP-TENI"/>
    <property type="match status" value="1"/>
</dbReference>
<dbReference type="SUPFAM" id="SSF51391">
    <property type="entry name" value="Thiamin phosphate synthase"/>
    <property type="match status" value="1"/>
</dbReference>
<sequence length="240" mass="25817">MEKKNCNPKETSSQKASDKNHLTLKNSLLKDIDFYLVTDSGLSKKGTLSDVKESVEAGCKIVQYREKCKSTGEMIDEAAEIKKICSGRAIFLINDRIDVALVVDADGVHIGQDDMPIETARKILGANKIIGLTVHNADEAIEAEKSGADYVGLGSIFDTFTKKDAGKGIGPASIREVRNAIKISVVAIGGINKENCRSVIENGADSLVAISAVVCSDDVKKETREFIDIIREIKGTGSSK</sequence>
<feature type="chain" id="PRO_0000157070" description="Thiamine-phosphate synthase">
    <location>
        <begin position="1"/>
        <end position="240"/>
    </location>
</feature>
<feature type="binding site" evidence="1">
    <location>
        <begin position="63"/>
        <end position="67"/>
    </location>
    <ligand>
        <name>4-amino-2-methyl-5-(diphosphooxymethyl)pyrimidine</name>
        <dbReference type="ChEBI" id="CHEBI:57841"/>
    </ligand>
</feature>
<feature type="binding site" evidence="1">
    <location>
        <position position="94"/>
    </location>
    <ligand>
        <name>4-amino-2-methyl-5-(diphosphooxymethyl)pyrimidine</name>
        <dbReference type="ChEBI" id="CHEBI:57841"/>
    </ligand>
</feature>
<feature type="binding site" evidence="1">
    <location>
        <position position="95"/>
    </location>
    <ligand>
        <name>Mg(2+)</name>
        <dbReference type="ChEBI" id="CHEBI:18420"/>
    </ligand>
</feature>
<feature type="binding site" evidence="1">
    <location>
        <position position="114"/>
    </location>
    <ligand>
        <name>Mg(2+)</name>
        <dbReference type="ChEBI" id="CHEBI:18420"/>
    </ligand>
</feature>
<feature type="binding site" evidence="1">
    <location>
        <position position="133"/>
    </location>
    <ligand>
        <name>4-amino-2-methyl-5-(diphosphooxymethyl)pyrimidine</name>
        <dbReference type="ChEBI" id="CHEBI:57841"/>
    </ligand>
</feature>
<feature type="binding site" evidence="1">
    <location>
        <begin position="159"/>
        <end position="161"/>
    </location>
    <ligand>
        <name>2-[(2R,5Z)-2-carboxy-4-methylthiazol-5(2H)-ylidene]ethyl phosphate</name>
        <dbReference type="ChEBI" id="CHEBI:62899"/>
    </ligand>
</feature>
<feature type="binding site" evidence="1">
    <location>
        <position position="162"/>
    </location>
    <ligand>
        <name>4-amino-2-methyl-5-(diphosphooxymethyl)pyrimidine</name>
        <dbReference type="ChEBI" id="CHEBI:57841"/>
    </ligand>
</feature>
<feature type="binding site" evidence="1">
    <location>
        <position position="190"/>
    </location>
    <ligand>
        <name>2-[(2R,5Z)-2-carboxy-4-methylthiazol-5(2H)-ylidene]ethyl phosphate</name>
        <dbReference type="ChEBI" id="CHEBI:62899"/>
    </ligand>
</feature>
<feature type="binding site" evidence="1">
    <location>
        <begin position="210"/>
        <end position="211"/>
    </location>
    <ligand>
        <name>2-[(2R,5Z)-2-carboxy-4-methylthiazol-5(2H)-ylidene]ethyl phosphate</name>
        <dbReference type="ChEBI" id="CHEBI:62899"/>
    </ligand>
</feature>
<accession>Q8PS49</accession>
<comment type="function">
    <text evidence="1">Condenses 4-methyl-5-(beta-hydroxyethyl)thiazole monophosphate (THZ-P) and 2-methyl-4-amino-5-hydroxymethyl pyrimidine pyrophosphate (HMP-PP) to form thiamine monophosphate (TMP).</text>
</comment>
<comment type="catalytic activity">
    <reaction evidence="1">
        <text>2-[(2R,5Z)-2-carboxy-4-methylthiazol-5(2H)-ylidene]ethyl phosphate + 4-amino-2-methyl-5-(diphosphooxymethyl)pyrimidine + 2 H(+) = thiamine phosphate + CO2 + diphosphate</text>
        <dbReference type="Rhea" id="RHEA:47844"/>
        <dbReference type="ChEBI" id="CHEBI:15378"/>
        <dbReference type="ChEBI" id="CHEBI:16526"/>
        <dbReference type="ChEBI" id="CHEBI:33019"/>
        <dbReference type="ChEBI" id="CHEBI:37575"/>
        <dbReference type="ChEBI" id="CHEBI:57841"/>
        <dbReference type="ChEBI" id="CHEBI:62899"/>
        <dbReference type="EC" id="2.5.1.3"/>
    </reaction>
</comment>
<comment type="catalytic activity">
    <reaction evidence="1">
        <text>2-(2-carboxy-4-methylthiazol-5-yl)ethyl phosphate + 4-amino-2-methyl-5-(diphosphooxymethyl)pyrimidine + 2 H(+) = thiamine phosphate + CO2 + diphosphate</text>
        <dbReference type="Rhea" id="RHEA:47848"/>
        <dbReference type="ChEBI" id="CHEBI:15378"/>
        <dbReference type="ChEBI" id="CHEBI:16526"/>
        <dbReference type="ChEBI" id="CHEBI:33019"/>
        <dbReference type="ChEBI" id="CHEBI:37575"/>
        <dbReference type="ChEBI" id="CHEBI:57841"/>
        <dbReference type="ChEBI" id="CHEBI:62890"/>
        <dbReference type="EC" id="2.5.1.3"/>
    </reaction>
</comment>
<comment type="catalytic activity">
    <reaction evidence="1">
        <text>4-methyl-5-(2-phosphooxyethyl)-thiazole + 4-amino-2-methyl-5-(diphosphooxymethyl)pyrimidine + H(+) = thiamine phosphate + diphosphate</text>
        <dbReference type="Rhea" id="RHEA:22328"/>
        <dbReference type="ChEBI" id="CHEBI:15378"/>
        <dbReference type="ChEBI" id="CHEBI:33019"/>
        <dbReference type="ChEBI" id="CHEBI:37575"/>
        <dbReference type="ChEBI" id="CHEBI:57841"/>
        <dbReference type="ChEBI" id="CHEBI:58296"/>
        <dbReference type="EC" id="2.5.1.3"/>
    </reaction>
</comment>
<comment type="cofactor">
    <cofactor evidence="1">
        <name>Mg(2+)</name>
        <dbReference type="ChEBI" id="CHEBI:18420"/>
    </cofactor>
    <text evidence="1">Binds 1 Mg(2+) ion per subunit.</text>
</comment>
<comment type="pathway">
    <text evidence="1">Cofactor biosynthesis; thiamine diphosphate biosynthesis; thiamine phosphate from 4-amino-2-methyl-5-diphosphomethylpyrimidine and 4-methyl-5-(2-phosphoethyl)-thiazole: step 1/1.</text>
</comment>
<comment type="similarity">
    <text evidence="1">Belongs to the thiamine-phosphate synthase family.</text>
</comment>
<evidence type="ECO:0000255" key="1">
    <source>
        <dbReference type="HAMAP-Rule" id="MF_00097"/>
    </source>
</evidence>
<reference key="1">
    <citation type="journal article" date="2002" name="J. Mol. Microbiol. Biotechnol.">
        <title>The genome of Methanosarcina mazei: evidence for lateral gene transfer between Bacteria and Archaea.</title>
        <authorList>
            <person name="Deppenmeier U."/>
            <person name="Johann A."/>
            <person name="Hartsch T."/>
            <person name="Merkl R."/>
            <person name="Schmitz R.A."/>
            <person name="Martinez-Arias R."/>
            <person name="Henne A."/>
            <person name="Wiezer A."/>
            <person name="Baeumer S."/>
            <person name="Jacobi C."/>
            <person name="Brueggemann H."/>
            <person name="Lienard T."/>
            <person name="Christmann A."/>
            <person name="Boemecke M."/>
            <person name="Steckel S."/>
            <person name="Bhattacharyya A."/>
            <person name="Lykidis A."/>
            <person name="Overbeek R."/>
            <person name="Klenk H.-P."/>
            <person name="Gunsalus R.P."/>
            <person name="Fritz H.-J."/>
            <person name="Gottschalk G."/>
        </authorList>
    </citation>
    <scope>NUCLEOTIDE SEQUENCE [LARGE SCALE GENOMIC DNA]</scope>
    <source>
        <strain>ATCC BAA-159 / DSM 3647 / Goe1 / Go1 / JCM 11833 / OCM 88</strain>
    </source>
</reference>
<gene>
    <name evidence="1" type="primary">thiE</name>
    <name type="ordered locus">MM_3235</name>
</gene>
<keyword id="KW-0460">Magnesium</keyword>
<keyword id="KW-0479">Metal-binding</keyword>
<keyword id="KW-0784">Thiamine biosynthesis</keyword>
<keyword id="KW-0808">Transferase</keyword>
<protein>
    <recommendedName>
        <fullName evidence="1">Thiamine-phosphate synthase</fullName>
        <shortName evidence="1">TP synthase</shortName>
        <shortName evidence="1">TPS</shortName>
        <ecNumber evidence="1">2.5.1.3</ecNumber>
    </recommendedName>
    <alternativeName>
        <fullName evidence="1">Thiamine-phosphate pyrophosphorylase</fullName>
        <shortName evidence="1">TMP pyrophosphorylase</shortName>
        <shortName evidence="1">TMP-PPase</shortName>
    </alternativeName>
</protein>
<proteinExistence type="inferred from homology"/>